<accession>Q63X76</accession>
<name>RSMA_BURPS</name>
<proteinExistence type="evidence at protein level"/>
<dbReference type="EC" id="2.1.1.182" evidence="1"/>
<dbReference type="EMBL" id="BX571965">
    <property type="protein sequence ID" value="CAH34654.1"/>
    <property type="molecule type" value="Genomic_DNA"/>
</dbReference>
<dbReference type="RefSeq" id="WP_004189099.1">
    <property type="nucleotide sequence ID" value="NZ_CP009538.1"/>
</dbReference>
<dbReference type="RefSeq" id="YP_107290.1">
    <property type="nucleotide sequence ID" value="NC_006350.1"/>
</dbReference>
<dbReference type="PDB" id="3UZU">
    <property type="method" value="X-ray"/>
    <property type="resolution" value="1.75 A"/>
    <property type="chains" value="A=1-275"/>
</dbReference>
<dbReference type="PDBsum" id="3UZU"/>
<dbReference type="SMR" id="Q63X76"/>
<dbReference type="STRING" id="272560.BPSL0661"/>
<dbReference type="GeneID" id="92977989"/>
<dbReference type="KEGG" id="bps:BPSL0661"/>
<dbReference type="PATRIC" id="fig|272560.51.peg.959"/>
<dbReference type="eggNOG" id="COG0030">
    <property type="taxonomic scope" value="Bacteria"/>
</dbReference>
<dbReference type="EvolutionaryTrace" id="Q63X76"/>
<dbReference type="Proteomes" id="UP000000605">
    <property type="component" value="Chromosome 1"/>
</dbReference>
<dbReference type="GO" id="GO:0005829">
    <property type="term" value="C:cytosol"/>
    <property type="evidence" value="ECO:0007669"/>
    <property type="project" value="TreeGrafter"/>
</dbReference>
<dbReference type="GO" id="GO:0052908">
    <property type="term" value="F:16S rRNA (adenine(1518)-N(6)/adenine(1519)-N(6))-dimethyltransferase activity"/>
    <property type="evidence" value="ECO:0007669"/>
    <property type="project" value="UniProtKB-EC"/>
</dbReference>
<dbReference type="GO" id="GO:0003723">
    <property type="term" value="F:RNA binding"/>
    <property type="evidence" value="ECO:0007669"/>
    <property type="project" value="UniProtKB-KW"/>
</dbReference>
<dbReference type="FunFam" id="1.10.8.100:FF:000001">
    <property type="entry name" value="Ribosomal RNA small subunit methyltransferase A"/>
    <property type="match status" value="1"/>
</dbReference>
<dbReference type="Gene3D" id="1.10.8.100">
    <property type="entry name" value="Ribosomal RNA adenine dimethylase-like, domain 2"/>
    <property type="match status" value="1"/>
</dbReference>
<dbReference type="Gene3D" id="3.40.50.150">
    <property type="entry name" value="Vaccinia Virus protein VP39"/>
    <property type="match status" value="1"/>
</dbReference>
<dbReference type="HAMAP" id="MF_00607">
    <property type="entry name" value="16SrRNA_methyltr_A"/>
    <property type="match status" value="1"/>
</dbReference>
<dbReference type="InterPro" id="IPR001737">
    <property type="entry name" value="KsgA/Erm"/>
</dbReference>
<dbReference type="InterPro" id="IPR023165">
    <property type="entry name" value="rRNA_Ade_diMease-like_C"/>
</dbReference>
<dbReference type="InterPro" id="IPR020598">
    <property type="entry name" value="rRNA_Ade_methylase_Trfase_N"/>
</dbReference>
<dbReference type="InterPro" id="IPR011530">
    <property type="entry name" value="rRNA_adenine_dimethylase"/>
</dbReference>
<dbReference type="InterPro" id="IPR029063">
    <property type="entry name" value="SAM-dependent_MTases_sf"/>
</dbReference>
<dbReference type="NCBIfam" id="TIGR00755">
    <property type="entry name" value="ksgA"/>
    <property type="match status" value="1"/>
</dbReference>
<dbReference type="PANTHER" id="PTHR11727">
    <property type="entry name" value="DIMETHYLADENOSINE TRANSFERASE"/>
    <property type="match status" value="1"/>
</dbReference>
<dbReference type="PANTHER" id="PTHR11727:SF7">
    <property type="entry name" value="DIMETHYLADENOSINE TRANSFERASE-RELATED"/>
    <property type="match status" value="1"/>
</dbReference>
<dbReference type="Pfam" id="PF00398">
    <property type="entry name" value="RrnaAD"/>
    <property type="match status" value="1"/>
</dbReference>
<dbReference type="SMART" id="SM00650">
    <property type="entry name" value="rADc"/>
    <property type="match status" value="1"/>
</dbReference>
<dbReference type="SUPFAM" id="SSF53335">
    <property type="entry name" value="S-adenosyl-L-methionine-dependent methyltransferases"/>
    <property type="match status" value="1"/>
</dbReference>
<dbReference type="PROSITE" id="PS51689">
    <property type="entry name" value="SAM_RNA_A_N6_MT"/>
    <property type="match status" value="1"/>
</dbReference>
<sequence>MSNSRQHQGHFARKRFGQNFLVDHGVIDAIVAAIRPERGERMVEIGPGLGALTGPVIARLATPGSPLHAVELDRDLIGRLEQRFGELLELHAGDALTFDFGSIARPGDEPSLRIIGNLPYNISSPLLFHLMSFAPVVIDQHFMLQNEVVERMVAEPGTKAFSRLSVMLQYRYVMDKLIDVPPESFQPPPKVDSAIVRMIPHAPHELPAVDPAVLGEVVTAAFSQRRKMLRNTLGGYRDLVDFDALGFDLARRAEDIGVDEYVRVAQAVASARASG</sequence>
<organism>
    <name type="scientific">Burkholderia pseudomallei (strain K96243)</name>
    <dbReference type="NCBI Taxonomy" id="272560"/>
    <lineage>
        <taxon>Bacteria</taxon>
        <taxon>Pseudomonadati</taxon>
        <taxon>Pseudomonadota</taxon>
        <taxon>Betaproteobacteria</taxon>
        <taxon>Burkholderiales</taxon>
        <taxon>Burkholderiaceae</taxon>
        <taxon>Burkholderia</taxon>
        <taxon>pseudomallei group</taxon>
    </lineage>
</organism>
<keyword id="KW-0002">3D-structure</keyword>
<keyword id="KW-0963">Cytoplasm</keyword>
<keyword id="KW-0489">Methyltransferase</keyword>
<keyword id="KW-1185">Reference proteome</keyword>
<keyword id="KW-0694">RNA-binding</keyword>
<keyword id="KW-0698">rRNA processing</keyword>
<keyword id="KW-0949">S-adenosyl-L-methionine</keyword>
<keyword id="KW-0808">Transferase</keyword>
<reference key="1">
    <citation type="journal article" date="2004" name="Proc. Natl. Acad. Sci. U.S.A.">
        <title>Genomic plasticity of the causative agent of melioidosis, Burkholderia pseudomallei.</title>
        <authorList>
            <person name="Holden M.T.G."/>
            <person name="Titball R.W."/>
            <person name="Peacock S.J."/>
            <person name="Cerdeno-Tarraga A.-M."/>
            <person name="Atkins T."/>
            <person name="Crossman L.C."/>
            <person name="Pitt T."/>
            <person name="Churcher C."/>
            <person name="Mungall K.L."/>
            <person name="Bentley S.D."/>
            <person name="Sebaihia M."/>
            <person name="Thomson N.R."/>
            <person name="Bason N."/>
            <person name="Beacham I.R."/>
            <person name="Brooks K."/>
            <person name="Brown K.A."/>
            <person name="Brown N.F."/>
            <person name="Challis G.L."/>
            <person name="Cherevach I."/>
            <person name="Chillingworth T."/>
            <person name="Cronin A."/>
            <person name="Crossett B."/>
            <person name="Davis P."/>
            <person name="DeShazer D."/>
            <person name="Feltwell T."/>
            <person name="Fraser A."/>
            <person name="Hance Z."/>
            <person name="Hauser H."/>
            <person name="Holroyd S."/>
            <person name="Jagels K."/>
            <person name="Keith K.E."/>
            <person name="Maddison M."/>
            <person name="Moule S."/>
            <person name="Price C."/>
            <person name="Quail M.A."/>
            <person name="Rabbinowitsch E."/>
            <person name="Rutherford K."/>
            <person name="Sanders M."/>
            <person name="Simmonds M."/>
            <person name="Songsivilai S."/>
            <person name="Stevens K."/>
            <person name="Tumapa S."/>
            <person name="Vesaratchavest M."/>
            <person name="Whitehead S."/>
            <person name="Yeats C."/>
            <person name="Barrell B.G."/>
            <person name="Oyston P.C.F."/>
            <person name="Parkhill J."/>
        </authorList>
    </citation>
    <scope>NUCLEOTIDE SEQUENCE [LARGE SCALE GENOMIC DNA]</scope>
    <source>
        <strain>K96243</strain>
    </source>
</reference>
<reference key="2">
    <citation type="submission" date="2011-12" db="PDB data bank">
        <title>The structure of the ribosomal RNA small subunit methyltransferase A from Burkholderia pseudomallei.</title>
        <authorList>
            <consortium name="Seattle structural genomics center for infectious disease (SSGCID)"/>
        </authorList>
    </citation>
    <scope>X-RAY CRYSTALLOGRAPHY (1.75 ANGSTROMS)</scope>
</reference>
<protein>
    <recommendedName>
        <fullName evidence="1">Ribosomal RNA small subunit methyltransferase A</fullName>
        <ecNumber evidence="1">2.1.1.182</ecNumber>
    </recommendedName>
    <alternativeName>
        <fullName evidence="1">16S rRNA (adenine(1518)-N(6)/adenine(1519)-N(6))-dimethyltransferase</fullName>
    </alternativeName>
    <alternativeName>
        <fullName evidence="1">16S rRNA dimethyladenosine transferase</fullName>
    </alternativeName>
    <alternativeName>
        <fullName evidence="1">16S rRNA dimethylase</fullName>
    </alternativeName>
    <alternativeName>
        <fullName evidence="1">S-adenosylmethionine-6-N', N'-adenosyl(rRNA) dimethyltransferase</fullName>
    </alternativeName>
</protein>
<gene>
    <name evidence="1" type="primary">rsmA</name>
    <name evidence="1" type="synonym">ksgA</name>
    <name type="ordered locus">BPSL0661</name>
</gene>
<comment type="function">
    <text evidence="1">Specifically dimethylates two adjacent adenosines (A1518 and A1519) in the loop of a conserved hairpin near the 3'-end of 16S rRNA in the 30S particle. May play a critical role in biogenesis of 30S subunits.</text>
</comment>
<comment type="catalytic activity">
    <reaction evidence="1">
        <text>adenosine(1518)/adenosine(1519) in 16S rRNA + 4 S-adenosyl-L-methionine = N(6)-dimethyladenosine(1518)/N(6)-dimethyladenosine(1519) in 16S rRNA + 4 S-adenosyl-L-homocysteine + 4 H(+)</text>
        <dbReference type="Rhea" id="RHEA:19609"/>
        <dbReference type="Rhea" id="RHEA-COMP:10232"/>
        <dbReference type="Rhea" id="RHEA-COMP:10233"/>
        <dbReference type="ChEBI" id="CHEBI:15378"/>
        <dbReference type="ChEBI" id="CHEBI:57856"/>
        <dbReference type="ChEBI" id="CHEBI:59789"/>
        <dbReference type="ChEBI" id="CHEBI:74411"/>
        <dbReference type="ChEBI" id="CHEBI:74493"/>
        <dbReference type="EC" id="2.1.1.182"/>
    </reaction>
</comment>
<comment type="subcellular location">
    <subcellularLocation>
        <location evidence="1">Cytoplasm</location>
    </subcellularLocation>
</comment>
<comment type="similarity">
    <text evidence="1">Belongs to the class I-like SAM-binding methyltransferase superfamily. rRNA adenine N(6)-methyltransferase family. RsmA subfamily.</text>
</comment>
<feature type="chain" id="PRO_0000101503" description="Ribosomal RNA small subunit methyltransferase A">
    <location>
        <begin position="1"/>
        <end position="275"/>
    </location>
</feature>
<feature type="binding site" evidence="1">
    <location>
        <position position="19"/>
    </location>
    <ligand>
        <name>S-adenosyl-L-methionine</name>
        <dbReference type="ChEBI" id="CHEBI:59789"/>
    </ligand>
</feature>
<feature type="binding site" evidence="1">
    <location>
        <position position="21"/>
    </location>
    <ligand>
        <name>S-adenosyl-L-methionine</name>
        <dbReference type="ChEBI" id="CHEBI:59789"/>
    </ligand>
</feature>
<feature type="binding site" evidence="1">
    <location>
        <position position="46"/>
    </location>
    <ligand>
        <name>S-adenosyl-L-methionine</name>
        <dbReference type="ChEBI" id="CHEBI:59789"/>
    </ligand>
</feature>
<feature type="binding site" evidence="1">
    <location>
        <position position="71"/>
    </location>
    <ligand>
        <name>S-adenosyl-L-methionine</name>
        <dbReference type="ChEBI" id="CHEBI:59789"/>
    </ligand>
</feature>
<feature type="binding site" evidence="1">
    <location>
        <position position="94"/>
    </location>
    <ligand>
        <name>S-adenosyl-L-methionine</name>
        <dbReference type="ChEBI" id="CHEBI:59789"/>
    </ligand>
</feature>
<feature type="binding site" evidence="1">
    <location>
        <position position="117"/>
    </location>
    <ligand>
        <name>S-adenosyl-L-methionine</name>
        <dbReference type="ChEBI" id="CHEBI:59789"/>
    </ligand>
</feature>
<feature type="helix" evidence="2">
    <location>
        <begin position="24"/>
        <end position="34"/>
    </location>
</feature>
<feature type="strand" evidence="2">
    <location>
        <begin position="41"/>
        <end position="45"/>
    </location>
</feature>
<feature type="helix" evidence="2">
    <location>
        <begin position="53"/>
        <end position="60"/>
    </location>
</feature>
<feature type="strand" evidence="2">
    <location>
        <begin position="67"/>
        <end position="71"/>
    </location>
</feature>
<feature type="helix" evidence="2">
    <location>
        <begin position="74"/>
        <end position="84"/>
    </location>
</feature>
<feature type="helix" evidence="2">
    <location>
        <begin position="85"/>
        <end position="87"/>
    </location>
</feature>
<feature type="strand" evidence="2">
    <location>
        <begin position="88"/>
        <end position="93"/>
    </location>
</feature>
<feature type="helix" evidence="2">
    <location>
        <begin position="95"/>
        <end position="97"/>
    </location>
</feature>
<feature type="helix" evidence="2">
    <location>
        <begin position="100"/>
        <end position="103"/>
    </location>
</feature>
<feature type="strand" evidence="2">
    <location>
        <begin position="106"/>
        <end position="109"/>
    </location>
</feature>
<feature type="strand" evidence="2">
    <location>
        <begin position="112"/>
        <end position="117"/>
    </location>
</feature>
<feature type="helix" evidence="2">
    <location>
        <begin position="120"/>
        <end position="130"/>
    </location>
</feature>
<feature type="helix" evidence="2">
    <location>
        <begin position="131"/>
        <end position="136"/>
    </location>
</feature>
<feature type="strand" evidence="2">
    <location>
        <begin position="137"/>
        <end position="145"/>
    </location>
</feature>
<feature type="helix" evidence="2">
    <location>
        <begin position="146"/>
        <end position="152"/>
    </location>
</feature>
<feature type="helix" evidence="2">
    <location>
        <begin position="163"/>
        <end position="171"/>
    </location>
</feature>
<feature type="strand" evidence="2">
    <location>
        <begin position="172"/>
        <end position="180"/>
    </location>
</feature>
<feature type="helix" evidence="2">
    <location>
        <begin position="182"/>
        <end position="184"/>
    </location>
</feature>
<feature type="strand" evidence="2">
    <location>
        <begin position="185"/>
        <end position="187"/>
    </location>
</feature>
<feature type="strand" evidence="2">
    <location>
        <begin position="193"/>
        <end position="200"/>
    </location>
</feature>
<feature type="helix" evidence="2">
    <location>
        <begin position="203"/>
        <end position="205"/>
    </location>
</feature>
<feature type="helix" evidence="2">
    <location>
        <begin position="211"/>
        <end position="221"/>
    </location>
</feature>
<feature type="helix" evidence="2">
    <location>
        <begin position="222"/>
        <end position="224"/>
    </location>
</feature>
<feature type="helix" evidence="2">
    <location>
        <begin position="229"/>
        <end position="232"/>
    </location>
</feature>
<feature type="helix" evidence="2">
    <location>
        <begin position="234"/>
        <end position="236"/>
    </location>
</feature>
<feature type="turn" evidence="2">
    <location>
        <begin position="237"/>
        <end position="239"/>
    </location>
</feature>
<feature type="turn" evidence="2">
    <location>
        <begin position="242"/>
        <end position="246"/>
    </location>
</feature>
<feature type="helix" evidence="2">
    <location>
        <begin position="253"/>
        <end position="255"/>
    </location>
</feature>
<feature type="helix" evidence="2">
    <location>
        <begin position="258"/>
        <end position="271"/>
    </location>
</feature>
<evidence type="ECO:0000255" key="1">
    <source>
        <dbReference type="HAMAP-Rule" id="MF_00607"/>
    </source>
</evidence>
<evidence type="ECO:0007829" key="2">
    <source>
        <dbReference type="PDB" id="3UZU"/>
    </source>
</evidence>